<protein>
    <recommendedName>
        <fullName evidence="1">Ribulose bisphosphate carboxylase large chain</fullName>
        <shortName evidence="1">RuBisCO large subunit</shortName>
        <ecNumber evidence="1">4.1.1.39</ecNumber>
    </recommendedName>
</protein>
<sequence length="460" mass="51159">VGFKAGVKDYRLTYYTPEYQTKDTDILAAFRVTPQPGVPPEEAGXAVAAESSTGTWTTVWTDGLTSLDRYKGRCYDIEPVPGEETQFIAYVAYPLDLFEEGSVTNMFTSIVGNVFGFKALRALRLEDLRIPPAYSKTFQGPPHGIQVERDKLNKYGRPLLGCTIKPKLGLSAKNYGRAVYECLRGGLDFTKDDENVNSQPFMRWRDRFCFCAEALYKAQAETGEIKGHYLNATAGTSEEMMKRAVFARELGVPIVMHDYLTGGFTSNTSLAHYCRDNGLLLHIHRAMHAVIDRQRNHGIHFRVLAKALRMSGGDHIHAGTVVGKLEGEREVTLGFVDLLRDDFIEKDRSRGIYFTQDWVSMPGVLPVASGGIHVWHMPALTEIFGDDSVLQFGGGTLGHPWGNAPGAVANRVALEACVQARNEGRDLAREGNEVIREATKWSPELAAACEVWKEIKFEFD</sequence>
<evidence type="ECO:0000255" key="1">
    <source>
        <dbReference type="HAMAP-Rule" id="MF_01338"/>
    </source>
</evidence>
<proteinExistence type="inferred from homology"/>
<accession>Q32026</accession>
<geneLocation type="chloroplast"/>
<organism>
    <name type="scientific">Cunninghamia lanceolata</name>
    <name type="common">China fir</name>
    <name type="synonym">Pinus lanceolata</name>
    <dbReference type="NCBI Taxonomy" id="28977"/>
    <lineage>
        <taxon>Eukaryota</taxon>
        <taxon>Viridiplantae</taxon>
        <taxon>Streptophyta</taxon>
        <taxon>Embryophyta</taxon>
        <taxon>Tracheophyta</taxon>
        <taxon>Spermatophyta</taxon>
        <taxon>Pinopsida</taxon>
        <taxon>Pinidae</taxon>
        <taxon>Conifers II</taxon>
        <taxon>Cupressales</taxon>
        <taxon>Cupressaceae</taxon>
        <taxon>Cunninghamia</taxon>
    </lineage>
</organism>
<gene>
    <name evidence="1" type="primary">rbcL</name>
</gene>
<name>RBL_CUNLA</name>
<feature type="chain" id="PRO_0000062430" description="Ribulose bisphosphate carboxylase large chain">
    <location>
        <begin position="1" status="less than"/>
        <end position="460" status="greater than"/>
    </location>
</feature>
<feature type="active site" description="Proton acceptor" evidence="1">
    <location>
        <position position="165"/>
    </location>
</feature>
<feature type="active site" description="Proton acceptor" evidence="1">
    <location>
        <position position="284"/>
    </location>
</feature>
<feature type="binding site" description="in homodimeric partner" evidence="1">
    <location>
        <position position="113"/>
    </location>
    <ligand>
        <name>substrate</name>
    </ligand>
</feature>
<feature type="binding site" evidence="1">
    <location>
        <position position="163"/>
    </location>
    <ligand>
        <name>substrate</name>
    </ligand>
</feature>
<feature type="binding site" evidence="1">
    <location>
        <position position="167"/>
    </location>
    <ligand>
        <name>substrate</name>
    </ligand>
</feature>
<feature type="binding site" description="via carbamate group" evidence="1">
    <location>
        <position position="191"/>
    </location>
    <ligand>
        <name>Mg(2+)</name>
        <dbReference type="ChEBI" id="CHEBI:18420"/>
    </ligand>
</feature>
<feature type="binding site" evidence="1">
    <location>
        <position position="193"/>
    </location>
    <ligand>
        <name>Mg(2+)</name>
        <dbReference type="ChEBI" id="CHEBI:18420"/>
    </ligand>
</feature>
<feature type="binding site" evidence="1">
    <location>
        <position position="194"/>
    </location>
    <ligand>
        <name>Mg(2+)</name>
        <dbReference type="ChEBI" id="CHEBI:18420"/>
    </ligand>
</feature>
<feature type="binding site" evidence="1">
    <location>
        <position position="285"/>
    </location>
    <ligand>
        <name>substrate</name>
    </ligand>
</feature>
<feature type="binding site" evidence="1">
    <location>
        <position position="317"/>
    </location>
    <ligand>
        <name>substrate</name>
    </ligand>
</feature>
<feature type="binding site" evidence="1">
    <location>
        <position position="369"/>
    </location>
    <ligand>
        <name>substrate</name>
    </ligand>
</feature>
<feature type="site" description="Transition state stabilizer" evidence="1">
    <location>
        <position position="324"/>
    </location>
</feature>
<feature type="modified residue" description="N6,N6,N6-trimethyllysine" evidence="1">
    <location>
        <position position="4"/>
    </location>
</feature>
<feature type="modified residue" description="N6-carboxylysine" evidence="1">
    <location>
        <position position="191"/>
    </location>
</feature>
<feature type="non-terminal residue">
    <location>
        <position position="1"/>
    </location>
</feature>
<feature type="non-terminal residue">
    <location>
        <position position="460"/>
    </location>
</feature>
<dbReference type="EC" id="4.1.1.39" evidence="1"/>
<dbReference type="EMBL" id="L25757">
    <property type="protein sequence ID" value="AAA84186.2"/>
    <property type="molecule type" value="Genomic_DNA"/>
</dbReference>
<dbReference type="GO" id="GO:0009507">
    <property type="term" value="C:chloroplast"/>
    <property type="evidence" value="ECO:0007669"/>
    <property type="project" value="UniProtKB-SubCell"/>
</dbReference>
<dbReference type="GO" id="GO:0000287">
    <property type="term" value="F:magnesium ion binding"/>
    <property type="evidence" value="ECO:0007669"/>
    <property type="project" value="InterPro"/>
</dbReference>
<dbReference type="GO" id="GO:0004497">
    <property type="term" value="F:monooxygenase activity"/>
    <property type="evidence" value="ECO:0007669"/>
    <property type="project" value="UniProtKB-KW"/>
</dbReference>
<dbReference type="GO" id="GO:0016984">
    <property type="term" value="F:ribulose-bisphosphate carboxylase activity"/>
    <property type="evidence" value="ECO:0007669"/>
    <property type="project" value="UniProtKB-EC"/>
</dbReference>
<dbReference type="GO" id="GO:0009853">
    <property type="term" value="P:photorespiration"/>
    <property type="evidence" value="ECO:0007669"/>
    <property type="project" value="UniProtKB-KW"/>
</dbReference>
<dbReference type="GO" id="GO:0019253">
    <property type="term" value="P:reductive pentose-phosphate cycle"/>
    <property type="evidence" value="ECO:0007669"/>
    <property type="project" value="UniProtKB-KW"/>
</dbReference>
<dbReference type="CDD" id="cd08212">
    <property type="entry name" value="RuBisCO_large_I"/>
    <property type="match status" value="1"/>
</dbReference>
<dbReference type="FunFam" id="3.20.20.110:FF:000001">
    <property type="entry name" value="Ribulose bisphosphate carboxylase large chain"/>
    <property type="match status" value="1"/>
</dbReference>
<dbReference type="FunFam" id="3.30.70.150:FF:000001">
    <property type="entry name" value="Ribulose bisphosphate carboxylase large chain"/>
    <property type="match status" value="1"/>
</dbReference>
<dbReference type="Gene3D" id="3.20.20.110">
    <property type="entry name" value="Ribulose bisphosphate carboxylase, large subunit, C-terminal domain"/>
    <property type="match status" value="1"/>
</dbReference>
<dbReference type="Gene3D" id="3.30.70.150">
    <property type="entry name" value="RuBisCO large subunit, N-terminal domain"/>
    <property type="match status" value="1"/>
</dbReference>
<dbReference type="HAMAP" id="MF_01338">
    <property type="entry name" value="RuBisCO_L_type1"/>
    <property type="match status" value="1"/>
</dbReference>
<dbReference type="InterPro" id="IPR033966">
    <property type="entry name" value="RuBisCO"/>
</dbReference>
<dbReference type="InterPro" id="IPR020878">
    <property type="entry name" value="RuBisCo_large_chain_AS"/>
</dbReference>
<dbReference type="InterPro" id="IPR000685">
    <property type="entry name" value="RuBisCO_lsu_C"/>
</dbReference>
<dbReference type="InterPro" id="IPR036376">
    <property type="entry name" value="RuBisCO_lsu_C_sf"/>
</dbReference>
<dbReference type="InterPro" id="IPR017443">
    <property type="entry name" value="RuBisCO_lsu_fd_N"/>
</dbReference>
<dbReference type="InterPro" id="IPR036422">
    <property type="entry name" value="RuBisCO_lsu_N_sf"/>
</dbReference>
<dbReference type="InterPro" id="IPR020888">
    <property type="entry name" value="RuBisCO_lsuI"/>
</dbReference>
<dbReference type="NCBIfam" id="NF003252">
    <property type="entry name" value="PRK04208.1"/>
    <property type="match status" value="1"/>
</dbReference>
<dbReference type="PANTHER" id="PTHR42704">
    <property type="entry name" value="RIBULOSE BISPHOSPHATE CARBOXYLASE"/>
    <property type="match status" value="1"/>
</dbReference>
<dbReference type="PANTHER" id="PTHR42704:SF15">
    <property type="entry name" value="RIBULOSE BISPHOSPHATE CARBOXYLASE LARGE CHAIN"/>
    <property type="match status" value="1"/>
</dbReference>
<dbReference type="Pfam" id="PF00016">
    <property type="entry name" value="RuBisCO_large"/>
    <property type="match status" value="1"/>
</dbReference>
<dbReference type="Pfam" id="PF02788">
    <property type="entry name" value="RuBisCO_large_N"/>
    <property type="match status" value="1"/>
</dbReference>
<dbReference type="SFLD" id="SFLDG01052">
    <property type="entry name" value="RuBisCO"/>
    <property type="match status" value="1"/>
</dbReference>
<dbReference type="SFLD" id="SFLDS00014">
    <property type="entry name" value="RuBisCO"/>
    <property type="match status" value="1"/>
</dbReference>
<dbReference type="SFLD" id="SFLDG00301">
    <property type="entry name" value="RuBisCO-like_proteins"/>
    <property type="match status" value="1"/>
</dbReference>
<dbReference type="SUPFAM" id="SSF51649">
    <property type="entry name" value="RuBisCo, C-terminal domain"/>
    <property type="match status" value="1"/>
</dbReference>
<dbReference type="SUPFAM" id="SSF54966">
    <property type="entry name" value="RuBisCO, large subunit, small (N-terminal) domain"/>
    <property type="match status" value="1"/>
</dbReference>
<dbReference type="PROSITE" id="PS00157">
    <property type="entry name" value="RUBISCO_LARGE"/>
    <property type="match status" value="1"/>
</dbReference>
<reference key="1">
    <citation type="journal article" date="1994" name="Syst. Bot.">
        <title>Phylogenetic relationships among genera of the conifer families Taxodiaceae and Cupressaceae: evidence from rbcL sequences.</title>
        <authorList>
            <person name="Brunsfeld S.J."/>
            <person name="Soltis P.S."/>
            <person name="Soltis D.E."/>
            <person name="Gadek P.A."/>
            <person name="Quinn C.J."/>
            <person name="Strenge D.D."/>
            <person name="Ranker T.A."/>
        </authorList>
        <dbReference type="AGRICOLA" id="IND20410577"/>
    </citation>
    <scope>NUCLEOTIDE SEQUENCE [GENOMIC DNA]</scope>
</reference>
<comment type="function">
    <text evidence="1">RuBisCO catalyzes two reactions: the carboxylation of D-ribulose 1,5-bisphosphate, the primary event in carbon dioxide fixation, as well as the oxidative fragmentation of the pentose substrate in the photorespiration process. Both reactions occur simultaneously and in competition at the same active site.</text>
</comment>
<comment type="catalytic activity">
    <reaction evidence="1">
        <text>2 (2R)-3-phosphoglycerate + 2 H(+) = D-ribulose 1,5-bisphosphate + CO2 + H2O</text>
        <dbReference type="Rhea" id="RHEA:23124"/>
        <dbReference type="ChEBI" id="CHEBI:15377"/>
        <dbReference type="ChEBI" id="CHEBI:15378"/>
        <dbReference type="ChEBI" id="CHEBI:16526"/>
        <dbReference type="ChEBI" id="CHEBI:57870"/>
        <dbReference type="ChEBI" id="CHEBI:58272"/>
        <dbReference type="EC" id="4.1.1.39"/>
    </reaction>
</comment>
<comment type="catalytic activity">
    <reaction evidence="1">
        <text>D-ribulose 1,5-bisphosphate + O2 = 2-phosphoglycolate + (2R)-3-phosphoglycerate + 2 H(+)</text>
        <dbReference type="Rhea" id="RHEA:36631"/>
        <dbReference type="ChEBI" id="CHEBI:15378"/>
        <dbReference type="ChEBI" id="CHEBI:15379"/>
        <dbReference type="ChEBI" id="CHEBI:57870"/>
        <dbReference type="ChEBI" id="CHEBI:58033"/>
        <dbReference type="ChEBI" id="CHEBI:58272"/>
    </reaction>
</comment>
<comment type="cofactor">
    <cofactor evidence="1">
        <name>Mg(2+)</name>
        <dbReference type="ChEBI" id="CHEBI:18420"/>
    </cofactor>
    <text evidence="1">Binds 1 Mg(2+) ion per subunit.</text>
</comment>
<comment type="subunit">
    <text evidence="1">Heterohexadecamer of 8 large chains and 8 small chains.</text>
</comment>
<comment type="subcellular location">
    <subcellularLocation>
        <location>Plastid</location>
        <location>Chloroplast</location>
    </subcellularLocation>
</comment>
<comment type="miscellaneous">
    <text evidence="1">The basic functional RuBisCO is composed of a large chain homodimer in a 'head-to-tail' conformation. In form I RuBisCO this homodimer is arranged in a barrel-like tetramer with the small subunits forming a tetrameric 'cap' on each end of the 'barrel'.</text>
</comment>
<comment type="similarity">
    <text evidence="1">Belongs to the RuBisCO large chain family. Type I subfamily.</text>
</comment>
<keyword id="KW-0113">Calvin cycle</keyword>
<keyword id="KW-0120">Carbon dioxide fixation</keyword>
<keyword id="KW-0150">Chloroplast</keyword>
<keyword id="KW-0456">Lyase</keyword>
<keyword id="KW-0460">Magnesium</keyword>
<keyword id="KW-0479">Metal-binding</keyword>
<keyword id="KW-0488">Methylation</keyword>
<keyword id="KW-0503">Monooxygenase</keyword>
<keyword id="KW-0560">Oxidoreductase</keyword>
<keyword id="KW-0601">Photorespiration</keyword>
<keyword id="KW-0602">Photosynthesis</keyword>
<keyword id="KW-0934">Plastid</keyword>